<evidence type="ECO:0000250" key="1"/>
<evidence type="ECO:0000250" key="2">
    <source>
        <dbReference type="UniProtKB" id="P01106"/>
    </source>
</evidence>
<evidence type="ECO:0000255" key="3">
    <source>
        <dbReference type="PROSITE-ProRule" id="PRU00981"/>
    </source>
</evidence>
<evidence type="ECO:0000256" key="4">
    <source>
        <dbReference type="SAM" id="MobiDB-lite"/>
    </source>
</evidence>
<evidence type="ECO:0000305" key="5"/>
<name>MYCB_XENLA</name>
<sequence length="420" mass="47861">MPLNANFPSKNYDYDYDLQPCFFFLEEENFYHQQSRLQPPAPSEDIWKKFELLPTPPLSPSRRSSQSSLFPSTADQLEMVTEFLGGDMVNQSFICEADDEALLKSIVIQDCMWSGFSAAAKLEKVVSEKLASYQASRKESALSTSQCQSQPPQSPLKSPSCDGSLNLGGTNRSSHEFLQDPSSDCVDPSVVFPYPLNDSISNASSPCQDLMLETPPISSNSSSSESEDEQEDDDDDEDCDEEEEIDVVTVEKRQTASRRMESGSHSQSSRPHHSPLVLKRCHVPIHQHNYAASPSTKVDYVSSKRAKLESNVRVLKQISNNRKCASPRSSDSEENDKRRTHNVLERQRRNELKLSFFALRDQVPRWRNNEKAPKVVILKKATEYAISMQEDERRLIRETEQLKYRKEQLKQRLQQLRNSV</sequence>
<gene>
    <name type="primary">myc-b</name>
    <name type="synonym">myc2</name>
</gene>
<organism>
    <name type="scientific">Xenopus laevis</name>
    <name type="common">African clawed frog</name>
    <dbReference type="NCBI Taxonomy" id="8355"/>
    <lineage>
        <taxon>Eukaryota</taxon>
        <taxon>Metazoa</taxon>
        <taxon>Chordata</taxon>
        <taxon>Craniata</taxon>
        <taxon>Vertebrata</taxon>
        <taxon>Euteleostomi</taxon>
        <taxon>Amphibia</taxon>
        <taxon>Batrachia</taxon>
        <taxon>Anura</taxon>
        <taxon>Pipoidea</taxon>
        <taxon>Pipidae</taxon>
        <taxon>Xenopodinae</taxon>
        <taxon>Xenopus</taxon>
        <taxon>Xenopus</taxon>
    </lineage>
</organism>
<keyword id="KW-0010">Activator</keyword>
<keyword id="KW-0238">DNA-binding</keyword>
<keyword id="KW-0539">Nucleus</keyword>
<keyword id="KW-1185">Reference proteome</keyword>
<keyword id="KW-0804">Transcription</keyword>
<keyword id="KW-0805">Transcription regulation</keyword>
<dbReference type="EMBL" id="X14807">
    <property type="protein sequence ID" value="CAA32912.1"/>
    <property type="molecule type" value="mRNA"/>
</dbReference>
<dbReference type="EMBL" id="X56870">
    <property type="protein sequence ID" value="CAA40194.1"/>
    <property type="molecule type" value="mRNA"/>
</dbReference>
<dbReference type="EMBL" id="X56872">
    <property type="protein sequence ID" value="CAA40196.1"/>
    <property type="molecule type" value="Genomic_DNA"/>
</dbReference>
<dbReference type="PIR" id="S12484">
    <property type="entry name" value="S12484"/>
</dbReference>
<dbReference type="SMR" id="P15171"/>
<dbReference type="DNASU" id="399315"/>
<dbReference type="GeneID" id="399315"/>
<dbReference type="KEGG" id="xla:399315"/>
<dbReference type="AGR" id="Xenbase:XB-GENE-6256575"/>
<dbReference type="CTD" id="399315"/>
<dbReference type="Xenbase" id="XB-GENE-6256575">
    <property type="gene designation" value="myc.L"/>
</dbReference>
<dbReference type="OrthoDB" id="5964374at2759"/>
<dbReference type="Proteomes" id="UP000186698">
    <property type="component" value="Chromosome 6L"/>
</dbReference>
<dbReference type="Bgee" id="399315">
    <property type="expression patterns" value="Expressed in neurula embryo and 19 other cell types or tissues"/>
</dbReference>
<dbReference type="GO" id="GO:0005634">
    <property type="term" value="C:nucleus"/>
    <property type="evidence" value="ECO:0007669"/>
    <property type="project" value="UniProtKB-SubCell"/>
</dbReference>
<dbReference type="GO" id="GO:0000981">
    <property type="term" value="F:DNA-binding transcription factor activity, RNA polymerase II-specific"/>
    <property type="evidence" value="ECO:0000250"/>
    <property type="project" value="UniProtKB"/>
</dbReference>
<dbReference type="GO" id="GO:0046983">
    <property type="term" value="F:protein dimerization activity"/>
    <property type="evidence" value="ECO:0007669"/>
    <property type="project" value="InterPro"/>
</dbReference>
<dbReference type="GO" id="GO:0000978">
    <property type="term" value="F:RNA polymerase II cis-regulatory region sequence-specific DNA binding"/>
    <property type="evidence" value="ECO:0000318"/>
    <property type="project" value="GO_Central"/>
</dbReference>
<dbReference type="GO" id="GO:0008284">
    <property type="term" value="P:positive regulation of cell population proliferation"/>
    <property type="evidence" value="ECO:0000318"/>
    <property type="project" value="GO_Central"/>
</dbReference>
<dbReference type="GO" id="GO:0006357">
    <property type="term" value="P:regulation of transcription by RNA polymerase II"/>
    <property type="evidence" value="ECO:0000318"/>
    <property type="project" value="GO_Central"/>
</dbReference>
<dbReference type="CDD" id="cd11458">
    <property type="entry name" value="bHLHzip_c-Myc"/>
    <property type="match status" value="1"/>
</dbReference>
<dbReference type="FunFam" id="4.10.280.10:FF:000019">
    <property type="entry name" value="Myc proto-oncogene protein"/>
    <property type="match status" value="1"/>
</dbReference>
<dbReference type="Gene3D" id="4.10.280.10">
    <property type="entry name" value="Helix-loop-helix DNA-binding domain"/>
    <property type="match status" value="1"/>
</dbReference>
<dbReference type="InterPro" id="IPR011598">
    <property type="entry name" value="bHLH_dom"/>
</dbReference>
<dbReference type="InterPro" id="IPR036638">
    <property type="entry name" value="HLH_DNA-bd_sf"/>
</dbReference>
<dbReference type="InterPro" id="IPR003327">
    <property type="entry name" value="Myc-LZ"/>
</dbReference>
<dbReference type="InterPro" id="IPR050433">
    <property type="entry name" value="Myc_transcription_factors"/>
</dbReference>
<dbReference type="InterPro" id="IPR002418">
    <property type="entry name" value="Tscrpt_reg_Myc"/>
</dbReference>
<dbReference type="InterPro" id="IPR012682">
    <property type="entry name" value="Tscrpt_reg_Myc_N"/>
</dbReference>
<dbReference type="PANTHER" id="PTHR45851">
    <property type="entry name" value="MYC PROTO-ONCOGENE"/>
    <property type="match status" value="1"/>
</dbReference>
<dbReference type="Pfam" id="PF00010">
    <property type="entry name" value="HLH"/>
    <property type="match status" value="1"/>
</dbReference>
<dbReference type="Pfam" id="PF02344">
    <property type="entry name" value="Myc-LZ"/>
    <property type="match status" value="1"/>
</dbReference>
<dbReference type="Pfam" id="PF01056">
    <property type="entry name" value="Myc_N"/>
    <property type="match status" value="1"/>
</dbReference>
<dbReference type="PIRSF" id="PIRSF001705">
    <property type="entry name" value="Myc_protein"/>
    <property type="match status" value="1"/>
</dbReference>
<dbReference type="PRINTS" id="PR00044">
    <property type="entry name" value="LEUZIPPRMYC"/>
</dbReference>
<dbReference type="SMART" id="SM00353">
    <property type="entry name" value="HLH"/>
    <property type="match status" value="1"/>
</dbReference>
<dbReference type="SUPFAM" id="SSF47459">
    <property type="entry name" value="HLH, helix-loop-helix DNA-binding domain"/>
    <property type="match status" value="1"/>
</dbReference>
<dbReference type="PROSITE" id="PS50888">
    <property type="entry name" value="BHLH"/>
    <property type="match status" value="1"/>
</dbReference>
<proteinExistence type="evidence at transcript level"/>
<reference key="1">
    <citation type="journal article" date="1989" name="EMBO J.">
        <title>Differential expression of two Xenopus c-myc proto-oncogenes during development.</title>
        <authorList>
            <person name="Vriz S."/>
            <person name="Taylor M."/>
            <person name="Mechali M."/>
        </authorList>
    </citation>
    <scope>NUCLEOTIDE SEQUENCE [MRNA]</scope>
    <source>
        <tissue>Oocyte</tissue>
    </source>
</reference>
<reference key="2">
    <citation type="journal article" date="1991" name="Nucleic Acids Res.">
        <title>Xenopus laevis c-myc I and II genes: molecular structure and developmental expression.</title>
        <authorList>
            <person name="Principaud E."/>
            <person name="Spohr G."/>
        </authorList>
    </citation>
    <scope>NUCLEOTIDE SEQUENCE [GENOMIC DNA / MRNA]</scope>
    <source>
        <tissue>Oocyte</tissue>
    </source>
</reference>
<comment type="function">
    <text evidence="2">Transcription factor that binds DNA in a non-specific manner, yet also specifically recognizes the core sequence 5'-CAC[GA]TG-3'. Activates the transcription of growth-related genes.</text>
</comment>
<comment type="subunit">
    <text evidence="1">Efficient DNA binding requires dimerization with another bHLH protein. Binds DNA as a heterodimer with MAX (By similarity).</text>
</comment>
<comment type="subcellular location">
    <subcellularLocation>
        <location>Nucleus</location>
    </subcellularLocation>
</comment>
<comment type="developmental stage">
    <text>C-MYC I is active in oocytes, while C-MYC II is active in both oocytes and post-gastrula embryos.</text>
</comment>
<comment type="domain">
    <text evidence="2">The 9aaTAD motif is a transactivation domain present in a large number of yeast and animal transcription factors.</text>
</comment>
<protein>
    <recommendedName>
        <fullName>Transcriptional regulator Myc-B</fullName>
    </recommendedName>
    <alternativeName>
        <fullName>c-Myc II</fullName>
    </alternativeName>
</protein>
<accession>P15171</accession>
<feature type="chain" id="PRO_0000127320" description="Transcriptional regulator Myc-B">
    <location>
        <begin position="1"/>
        <end position="420"/>
    </location>
</feature>
<feature type="domain" description="bHLH" evidence="3">
    <location>
        <begin position="336"/>
        <end position="388"/>
    </location>
</feature>
<feature type="region of interest" description="Disordered" evidence="4">
    <location>
        <begin position="141"/>
        <end position="181"/>
    </location>
</feature>
<feature type="region of interest" description="Disordered" evidence="4">
    <location>
        <begin position="203"/>
        <end position="275"/>
    </location>
</feature>
<feature type="region of interest" description="Disordered" evidence="4">
    <location>
        <begin position="319"/>
        <end position="345"/>
    </location>
</feature>
<feature type="region of interest" description="Leucine-zipper">
    <location>
        <begin position="395"/>
        <end position="416"/>
    </location>
</feature>
<feature type="short sequence motif" description="9aaTAD" evidence="2">
    <location>
        <begin position="78"/>
        <end position="86"/>
    </location>
</feature>
<feature type="compositionally biased region" description="Low complexity" evidence="4">
    <location>
        <begin position="143"/>
        <end position="160"/>
    </location>
</feature>
<feature type="compositionally biased region" description="Polar residues" evidence="4">
    <location>
        <begin position="161"/>
        <end position="172"/>
    </location>
</feature>
<feature type="compositionally biased region" description="Acidic residues" evidence="4">
    <location>
        <begin position="225"/>
        <end position="246"/>
    </location>
</feature>
<feature type="compositionally biased region" description="Basic and acidic residues" evidence="4">
    <location>
        <begin position="249"/>
        <end position="262"/>
    </location>
</feature>
<feature type="compositionally biased region" description="Polar residues" evidence="4">
    <location>
        <begin position="319"/>
        <end position="329"/>
    </location>
</feature>
<feature type="sequence conflict" description="In Ref. 2; CAA40194." evidence="5" ref="2">
    <original>C</original>
    <variation>W</variation>
    <location>
        <position position="185"/>
    </location>
</feature>
<feature type="sequence conflict" description="In Ref. 2; CAA40194." evidence="5" ref="2">
    <original>C</original>
    <variation>Y</variation>
    <location>
        <position position="324"/>
    </location>
</feature>
<feature type="sequence conflict" description="In Ref. 2; CAA40194." evidence="5" ref="2">
    <original>RWR</original>
    <variation>EVA</variation>
    <location>
        <begin position="365"/>
        <end position="367"/>
    </location>
</feature>